<comment type="function">
    <text evidence="1">Catalyzes the methyl esterification of L-isoaspartyl residues in peptides and proteins that result from spontaneous decomposition of normal L-aspartyl and L-asparaginyl residues. It plays a role in the repair and/or degradation of damaged proteins.</text>
</comment>
<comment type="catalytic activity">
    <reaction evidence="1">
        <text>[protein]-L-isoaspartate + S-adenosyl-L-methionine = [protein]-L-isoaspartate alpha-methyl ester + S-adenosyl-L-homocysteine</text>
        <dbReference type="Rhea" id="RHEA:12705"/>
        <dbReference type="Rhea" id="RHEA-COMP:12143"/>
        <dbReference type="Rhea" id="RHEA-COMP:12144"/>
        <dbReference type="ChEBI" id="CHEBI:57856"/>
        <dbReference type="ChEBI" id="CHEBI:59789"/>
        <dbReference type="ChEBI" id="CHEBI:90596"/>
        <dbReference type="ChEBI" id="CHEBI:90598"/>
        <dbReference type="EC" id="2.1.1.77"/>
    </reaction>
</comment>
<comment type="subcellular location">
    <subcellularLocation>
        <location evidence="1">Cytoplasm</location>
    </subcellularLocation>
</comment>
<comment type="similarity">
    <text evidence="1">Belongs to the methyltransferase superfamily. L-isoaspartyl/D-aspartyl protein methyltransferase family.</text>
</comment>
<protein>
    <recommendedName>
        <fullName evidence="1">Protein-L-isoaspartate O-methyltransferase</fullName>
        <ecNumber evidence="1">2.1.1.77</ecNumber>
    </recommendedName>
    <alternativeName>
        <fullName evidence="1">L-isoaspartyl protein carboxyl methyltransferase</fullName>
    </alternativeName>
    <alternativeName>
        <fullName evidence="1">Protein L-isoaspartyl methyltransferase</fullName>
    </alternativeName>
    <alternativeName>
        <fullName evidence="1">Protein-beta-aspartate methyltransferase</fullName>
        <shortName evidence="1">PIMT</shortName>
    </alternativeName>
</protein>
<dbReference type="EC" id="2.1.1.77" evidence="1"/>
<dbReference type="EMBL" id="CP001657">
    <property type="protein sequence ID" value="ACT14366.1"/>
    <property type="molecule type" value="Genomic_DNA"/>
</dbReference>
<dbReference type="RefSeq" id="WP_015841496.1">
    <property type="nucleotide sequence ID" value="NC_012917.1"/>
</dbReference>
<dbReference type="SMR" id="C6DDF9"/>
<dbReference type="STRING" id="561230.PC1_3350"/>
<dbReference type="KEGG" id="pct:PC1_3350"/>
<dbReference type="eggNOG" id="COG2518">
    <property type="taxonomic scope" value="Bacteria"/>
</dbReference>
<dbReference type="HOGENOM" id="CLU_055432_2_0_6"/>
<dbReference type="OrthoDB" id="9810066at2"/>
<dbReference type="Proteomes" id="UP000002736">
    <property type="component" value="Chromosome"/>
</dbReference>
<dbReference type="GO" id="GO:0005737">
    <property type="term" value="C:cytoplasm"/>
    <property type="evidence" value="ECO:0007669"/>
    <property type="project" value="UniProtKB-SubCell"/>
</dbReference>
<dbReference type="GO" id="GO:0004719">
    <property type="term" value="F:protein-L-isoaspartate (D-aspartate) O-methyltransferase activity"/>
    <property type="evidence" value="ECO:0007669"/>
    <property type="project" value="UniProtKB-UniRule"/>
</dbReference>
<dbReference type="GO" id="GO:0032259">
    <property type="term" value="P:methylation"/>
    <property type="evidence" value="ECO:0007669"/>
    <property type="project" value="UniProtKB-KW"/>
</dbReference>
<dbReference type="GO" id="GO:0036211">
    <property type="term" value="P:protein modification process"/>
    <property type="evidence" value="ECO:0007669"/>
    <property type="project" value="UniProtKB-UniRule"/>
</dbReference>
<dbReference type="GO" id="GO:0030091">
    <property type="term" value="P:protein repair"/>
    <property type="evidence" value="ECO:0007669"/>
    <property type="project" value="UniProtKB-UniRule"/>
</dbReference>
<dbReference type="CDD" id="cd02440">
    <property type="entry name" value="AdoMet_MTases"/>
    <property type="match status" value="1"/>
</dbReference>
<dbReference type="FunFam" id="3.40.50.150:FF:000010">
    <property type="entry name" value="Protein-L-isoaspartate O-methyltransferase"/>
    <property type="match status" value="1"/>
</dbReference>
<dbReference type="Gene3D" id="3.40.50.150">
    <property type="entry name" value="Vaccinia Virus protein VP39"/>
    <property type="match status" value="1"/>
</dbReference>
<dbReference type="HAMAP" id="MF_00090">
    <property type="entry name" value="PIMT"/>
    <property type="match status" value="1"/>
</dbReference>
<dbReference type="InterPro" id="IPR000682">
    <property type="entry name" value="PCMT"/>
</dbReference>
<dbReference type="InterPro" id="IPR029063">
    <property type="entry name" value="SAM-dependent_MTases_sf"/>
</dbReference>
<dbReference type="NCBIfam" id="TIGR00080">
    <property type="entry name" value="pimt"/>
    <property type="match status" value="1"/>
</dbReference>
<dbReference type="NCBIfam" id="NF001453">
    <property type="entry name" value="PRK00312.1"/>
    <property type="match status" value="1"/>
</dbReference>
<dbReference type="PANTHER" id="PTHR11579">
    <property type="entry name" value="PROTEIN-L-ISOASPARTATE O-METHYLTRANSFERASE"/>
    <property type="match status" value="1"/>
</dbReference>
<dbReference type="PANTHER" id="PTHR11579:SF0">
    <property type="entry name" value="PROTEIN-L-ISOASPARTATE(D-ASPARTATE) O-METHYLTRANSFERASE"/>
    <property type="match status" value="1"/>
</dbReference>
<dbReference type="Pfam" id="PF01135">
    <property type="entry name" value="PCMT"/>
    <property type="match status" value="1"/>
</dbReference>
<dbReference type="SUPFAM" id="SSF53335">
    <property type="entry name" value="S-adenosyl-L-methionine-dependent methyltransferases"/>
    <property type="match status" value="1"/>
</dbReference>
<dbReference type="PROSITE" id="PS01279">
    <property type="entry name" value="PCMT"/>
    <property type="match status" value="1"/>
</dbReference>
<keyword id="KW-0963">Cytoplasm</keyword>
<keyword id="KW-0489">Methyltransferase</keyword>
<keyword id="KW-0949">S-adenosyl-L-methionine</keyword>
<keyword id="KW-0808">Transferase</keyword>
<proteinExistence type="inferred from homology"/>
<sequence>MVNKRIETLLAQLRQQGIQDERLLKAIEAVPRERFVDEAFEHKAYENTALPIGSGQTISQPYMVAKMTELLSLTPVSRVLEIGTGSGYQTAILAHLVQHVCSVERIKGLQWQAKRRLKQLDLHNVSTRHGDGWQGWASRGPFDAIIVTAAPPEIPRALLEQLDEGGVMVLPVGEQSQILQVVQRHAGEFIIQTVEAVRFVPLVKGELA</sequence>
<evidence type="ECO:0000255" key="1">
    <source>
        <dbReference type="HAMAP-Rule" id="MF_00090"/>
    </source>
</evidence>
<feature type="chain" id="PRO_1000202663" description="Protein-L-isoaspartate O-methyltransferase">
    <location>
        <begin position="1"/>
        <end position="208"/>
    </location>
</feature>
<feature type="active site" evidence="1">
    <location>
        <position position="59"/>
    </location>
</feature>
<name>PIMT_PECCP</name>
<accession>C6DDF9</accession>
<organism>
    <name type="scientific">Pectobacterium carotovorum subsp. carotovorum (strain PC1)</name>
    <dbReference type="NCBI Taxonomy" id="561230"/>
    <lineage>
        <taxon>Bacteria</taxon>
        <taxon>Pseudomonadati</taxon>
        <taxon>Pseudomonadota</taxon>
        <taxon>Gammaproteobacteria</taxon>
        <taxon>Enterobacterales</taxon>
        <taxon>Pectobacteriaceae</taxon>
        <taxon>Pectobacterium</taxon>
    </lineage>
</organism>
<reference key="1">
    <citation type="submission" date="2009-07" db="EMBL/GenBank/DDBJ databases">
        <title>Complete sequence of Pectobacterium carotovorum subsp. carotovorum PC1.</title>
        <authorList>
            <consortium name="US DOE Joint Genome Institute"/>
            <person name="Lucas S."/>
            <person name="Copeland A."/>
            <person name="Lapidus A."/>
            <person name="Glavina del Rio T."/>
            <person name="Tice H."/>
            <person name="Bruce D."/>
            <person name="Goodwin L."/>
            <person name="Pitluck S."/>
            <person name="Munk A.C."/>
            <person name="Brettin T."/>
            <person name="Detter J.C."/>
            <person name="Han C."/>
            <person name="Tapia R."/>
            <person name="Larimer F."/>
            <person name="Land M."/>
            <person name="Hauser L."/>
            <person name="Kyrpides N."/>
            <person name="Mikhailova N."/>
            <person name="Balakrishnan V."/>
            <person name="Glasner J."/>
            <person name="Perna N.T."/>
        </authorList>
    </citation>
    <scope>NUCLEOTIDE SEQUENCE [LARGE SCALE GENOMIC DNA]</scope>
    <source>
        <strain>PC1</strain>
    </source>
</reference>
<gene>
    <name evidence="1" type="primary">pcm</name>
    <name type="ordered locus">PC1_3350</name>
</gene>